<accession>P59635</accession>
<accession>Q7TA11</accession>
<accession>Q7TA17</accession>
<proteinExistence type="evidence at protein level"/>
<organism>
    <name type="scientific">Severe acute respiratory syndrome coronavirus</name>
    <name type="common">SARS-CoV</name>
    <dbReference type="NCBI Taxonomy" id="694009"/>
    <lineage>
        <taxon>Viruses</taxon>
        <taxon>Riboviria</taxon>
        <taxon>Orthornavirae</taxon>
        <taxon>Pisuviricota</taxon>
        <taxon>Pisoniviricetes</taxon>
        <taxon>Nidovirales</taxon>
        <taxon>Cornidovirineae</taxon>
        <taxon>Coronaviridae</taxon>
        <taxon>Orthocoronavirinae</taxon>
        <taxon>Betacoronavirus</taxon>
        <taxon>Sarbecovirus</taxon>
    </lineage>
</organism>
<gene>
    <name type="ORF">7a</name>
</gene>
<keyword id="KW-0002">3D-structure</keyword>
<keyword id="KW-1015">Disulfide bond</keyword>
<keyword id="KW-1077">G0/G1 host cell cycle checkpoint dysregulation by virus</keyword>
<keyword id="KW-1038">Host endoplasmic reticulum</keyword>
<keyword id="KW-1040">Host Golgi apparatus</keyword>
<keyword id="KW-1043">Host membrane</keyword>
<keyword id="KW-0945">Host-virus interaction</keyword>
<keyword id="KW-1090">Inhibition of host innate immune response by virus</keyword>
<keyword id="KW-1084">Inhibition of host tetherin by virus</keyword>
<keyword id="KW-0472">Membrane</keyword>
<keyword id="KW-1121">Modulation of host cell cycle by virus</keyword>
<keyword id="KW-1185">Reference proteome</keyword>
<keyword id="KW-0732">Signal</keyword>
<keyword id="KW-0812">Transmembrane</keyword>
<keyword id="KW-1133">Transmembrane helix</keyword>
<keyword id="KW-0899">Viral immunoevasion</keyword>
<keyword id="KW-0946">Virion</keyword>
<feature type="signal peptide">
    <location>
        <begin position="1"/>
        <end position="15"/>
    </location>
</feature>
<feature type="chain" id="PRO_0000037435" description="ORF7a protein">
    <location>
        <begin position="16"/>
        <end position="122"/>
    </location>
</feature>
<feature type="topological domain" description="Virion surface" evidence="2">
    <location>
        <begin position="16"/>
        <end position="96"/>
    </location>
</feature>
<feature type="transmembrane region" description="Helical" evidence="2">
    <location>
        <begin position="97"/>
        <end position="117"/>
    </location>
</feature>
<feature type="topological domain" description="Intravirion" evidence="2">
    <location>
        <begin position="118"/>
        <end position="122"/>
    </location>
</feature>
<feature type="domain" description="X4e" evidence="3">
    <location>
        <begin position="16"/>
        <end position="81"/>
    </location>
</feature>
<feature type="short sequence motif" description="Di-lysine motif">
    <location>
        <begin position="118"/>
        <end position="122"/>
    </location>
</feature>
<feature type="disulfide bond" evidence="3">
    <location>
        <begin position="23"/>
        <end position="58"/>
    </location>
</feature>
<feature type="disulfide bond" evidence="3">
    <location>
        <begin position="35"/>
        <end position="67"/>
    </location>
</feature>
<feature type="sequence variant" description="In strain: Isolate Shanghai LY.">
    <original>G</original>
    <variation>A</variation>
    <location>
        <position position="38"/>
    </location>
</feature>
<feature type="mutagenesis site" description="Complete loss of signal sequence cleavage." evidence="5">
    <original>SCELY</original>
    <variation>LLLLL</variation>
    <location>
        <begin position="14"/>
        <end position="18"/>
    </location>
</feature>
<feature type="mutagenesis site" description="Induces rapid exit from the endoplasmic reticulum." evidence="5">
    <original>KRK</original>
    <variation>ERE</variation>
    <location>
        <begin position="118"/>
        <end position="120"/>
    </location>
</feature>
<feature type="strand" evidence="12">
    <location>
        <begin position="16"/>
        <end position="24"/>
    </location>
</feature>
<feature type="strand" evidence="12">
    <location>
        <begin position="27"/>
        <end position="32"/>
    </location>
</feature>
<feature type="strand" evidence="13">
    <location>
        <begin position="34"/>
        <end position="37"/>
    </location>
</feature>
<feature type="strand" evidence="12">
    <location>
        <begin position="39"/>
        <end position="44"/>
    </location>
</feature>
<feature type="turn" evidence="12">
    <location>
        <begin position="50"/>
        <end position="52"/>
    </location>
</feature>
<feature type="strand" evidence="12">
    <location>
        <begin position="53"/>
        <end position="57"/>
    </location>
</feature>
<feature type="strand" evidence="12">
    <location>
        <begin position="60"/>
        <end position="66"/>
    </location>
</feature>
<feature type="strand" evidence="12">
    <location>
        <begin position="72"/>
        <end position="80"/>
    </location>
</feature>
<feature type="strand" evidence="13">
    <location>
        <begin position="82"/>
        <end position="84"/>
    </location>
</feature>
<feature type="strand" evidence="13">
    <location>
        <begin position="89"/>
        <end position="93"/>
    </location>
</feature>
<feature type="strand" evidence="13">
    <location>
        <begin position="95"/>
        <end position="97"/>
    </location>
</feature>
<comment type="function">
    <text evidence="6 9 10 11">Plays a role as antagonist of host tetherin (BST2), disrupting its antiviral effect. Acts by binding to BST2 thereby interfering with its glycosylation. May suppress small interfering RNA (siRNA). May bind to host ITGAL, thereby playing a role in attachment or modulation of leukocytes.</text>
</comment>
<comment type="subunit">
    <text evidence="4 7 8 9 11">Interacts with the spike glycoprotein (PubMed:16840309). Interacts with M protein (PubMed:16580632). Interacts with E protein (PubMed:16580632). Interacts with the ORF3a protein (PubMed:15194747). Interacts with human SGT (PubMed:16580632). Interacts with host ITGAL (PubMed:18020948). Interacts with host BST2 (PubMed:26378163).</text>
</comment>
<comment type="interaction">
    <interactant intactId="EBI-25492879">
        <id>P59635</id>
    </interactant>
    <interactant intactId="EBI-15582614">
        <id>P59594</id>
        <label>S</label>
    </interactant>
    <organismsDiffer>false</organismsDiffer>
    <experiments>3</experiments>
</comment>
<comment type="interaction">
    <interactant intactId="EBI-25492879">
        <id>P59635</id>
    </interactant>
    <interactant intactId="EBI-347996">
        <id>O43765</id>
        <label>SGTA</label>
    </interactant>
    <organismsDiffer>true</organismsDiffer>
    <experiments>3</experiments>
</comment>
<comment type="subcellular location">
    <subcellularLocation>
        <location>Virion</location>
    </subcellularLocation>
    <subcellularLocation>
        <location>Host endoplasmic reticulum membrane</location>
        <topology>Single-pass membrane protein</topology>
    </subcellularLocation>
    <subcellularLocation>
        <location>Host endoplasmic reticulum-Golgi intermediate compartment membrane</location>
        <topology>Single-pass type I membrane protein</topology>
    </subcellularLocation>
    <subcellularLocation>
        <location>Host Golgi apparatus membrane</location>
        <topology>Single-pass membrane protein</topology>
    </subcellularLocation>
</comment>
<comment type="domain">
    <text evidence="1">The di-lysine motif confers endoplasmic reticulum localization for type I membrane proteins.</text>
</comment>
<sequence length="122" mass="13941">MKIILFLTLIVFTSCELYHYQECVRGTTVLLKEPCPSGTYEGNSPFHPLADNKFALTCTSTHFAFACADGTRHTYQLRARSVSPKLFIRQEEVQQELYSPLFLIVAALVFLILCFTIKRKTE</sequence>
<name>NS7A_SARS</name>
<evidence type="ECO:0000250" key="1"/>
<evidence type="ECO:0000255" key="2"/>
<evidence type="ECO:0000255" key="3">
    <source>
        <dbReference type="PROSITE-ProRule" id="PRU01267"/>
    </source>
</evidence>
<evidence type="ECO:0000269" key="4">
    <source>
    </source>
</evidence>
<evidence type="ECO:0000269" key="5">
    <source>
    </source>
</evidence>
<evidence type="ECO:0000269" key="6">
    <source>
    </source>
</evidence>
<evidence type="ECO:0000269" key="7">
    <source>
    </source>
</evidence>
<evidence type="ECO:0000269" key="8">
    <source>
    </source>
</evidence>
<evidence type="ECO:0000269" key="9">
    <source>
    </source>
</evidence>
<evidence type="ECO:0000269" key="10">
    <source>
    </source>
</evidence>
<evidence type="ECO:0000269" key="11">
    <source>
    </source>
</evidence>
<evidence type="ECO:0007829" key="12">
    <source>
        <dbReference type="PDB" id="1XAK"/>
    </source>
</evidence>
<evidence type="ECO:0007829" key="13">
    <source>
        <dbReference type="PDB" id="1YO4"/>
    </source>
</evidence>
<protein>
    <recommendedName>
        <fullName>ORF7a protein</fullName>
    </recommendedName>
    <alternativeName>
        <fullName>Accessory protein 7a</fullName>
    </alternativeName>
    <alternativeName>
        <fullName>Protein U122</fullName>
    </alternativeName>
    <alternativeName>
        <fullName>Protein X4</fullName>
    </alternativeName>
</protein>
<organismHost>
    <name type="scientific">Homo sapiens</name>
    <name type="common">Human</name>
    <dbReference type="NCBI Taxonomy" id="9606"/>
</organismHost>
<organismHost>
    <name type="scientific">Paguma larvata</name>
    <name type="common">Masked palm civet</name>
    <dbReference type="NCBI Taxonomy" id="9675"/>
</organismHost>
<dbReference type="EMBL" id="AY278741">
    <property type="protein sequence ID" value="AAP13449.1"/>
    <property type="molecule type" value="Genomic_RNA"/>
</dbReference>
<dbReference type="EMBL" id="AY274119">
    <property type="protein sequence ID" value="AAP41043.1"/>
    <property type="molecule type" value="Genomic_RNA"/>
</dbReference>
<dbReference type="EMBL" id="AY282752">
    <property type="status" value="NOT_ANNOTATED_CDS"/>
    <property type="molecule type" value="Genomic_RNA"/>
</dbReference>
<dbReference type="EMBL" id="AY278554">
    <property type="protein sequence ID" value="AAP13573.1"/>
    <property type="molecule type" value="Genomic_RNA"/>
</dbReference>
<dbReference type="EMBL" id="AY278491">
    <property type="status" value="NOT_ANNOTATED_CDS"/>
    <property type="molecule type" value="Genomic_RNA"/>
</dbReference>
<dbReference type="EMBL" id="AY278487">
    <property type="status" value="NOT_ANNOTATED_CDS"/>
    <property type="molecule type" value="Genomic_RNA"/>
</dbReference>
<dbReference type="EMBL" id="AY278488">
    <property type="protein sequence ID" value="AAP30036.1"/>
    <property type="molecule type" value="Genomic_RNA"/>
</dbReference>
<dbReference type="EMBL" id="AY278489">
    <property type="protein sequence ID" value="AAP51233.1"/>
    <property type="molecule type" value="Genomic_RNA"/>
</dbReference>
<dbReference type="EMBL" id="AY278490">
    <property type="status" value="NOT_ANNOTATED_CDS"/>
    <property type="molecule type" value="Genomic_RNA"/>
</dbReference>
<dbReference type="EMBL" id="AY279354">
    <property type="status" value="NOT_ANNOTATED_CDS"/>
    <property type="molecule type" value="Genomic_RNA"/>
</dbReference>
<dbReference type="EMBL" id="AY291451">
    <property type="protein sequence ID" value="AAP37023.1"/>
    <property type="molecule type" value="Genomic_RNA"/>
</dbReference>
<dbReference type="EMBL" id="AY310120">
    <property type="protein sequence ID" value="AAP50491.1"/>
    <property type="molecule type" value="Genomic_RNA"/>
</dbReference>
<dbReference type="EMBL" id="AY291315">
    <property type="protein sequence ID" value="AAP33703.1"/>
    <property type="molecule type" value="Genomic_RNA"/>
</dbReference>
<dbReference type="EMBL" id="AY338174">
    <property type="protein sequence ID" value="AAQ01603.1"/>
    <property type="molecule type" value="Genomic_RNA"/>
</dbReference>
<dbReference type="EMBL" id="AY338175">
    <property type="protein sequence ID" value="AAQ01615.1"/>
    <property type="molecule type" value="Genomic_RNA"/>
</dbReference>
<dbReference type="EMBL" id="AY348314">
    <property type="protein sequence ID" value="AAP97888.1"/>
    <property type="molecule type" value="Genomic_RNA"/>
</dbReference>
<dbReference type="EMBL" id="AP006557">
    <property type="protein sequence ID" value="BAC81354.1"/>
    <property type="molecule type" value="Genomic_RNA"/>
</dbReference>
<dbReference type="EMBL" id="AP006558">
    <property type="protein sequence ID" value="BAC81368.1"/>
    <property type="molecule type" value="Genomic_RNA"/>
</dbReference>
<dbReference type="EMBL" id="AP006559">
    <property type="protein sequence ID" value="BAC81382.1"/>
    <property type="molecule type" value="Genomic_RNA"/>
</dbReference>
<dbReference type="EMBL" id="AP006560">
    <property type="protein sequence ID" value="BAC81396.1"/>
    <property type="molecule type" value="Genomic_RNA"/>
</dbReference>
<dbReference type="EMBL" id="AP006561">
    <property type="protein sequence ID" value="BAC81410.1"/>
    <property type="molecule type" value="Genomic_RNA"/>
</dbReference>
<dbReference type="EMBL" id="AY323977">
    <property type="protein sequence ID" value="AAP72980.1"/>
    <property type="molecule type" value="Genomic_RNA"/>
</dbReference>
<dbReference type="EMBL" id="AY427439">
    <property type="protein sequence ID" value="AAQ94066.1"/>
    <property type="molecule type" value="Genomic_RNA"/>
</dbReference>
<dbReference type="EMBL" id="AY463059">
    <property type="protein sequence ID" value="AAP82982.2"/>
    <property type="molecule type" value="Genomic_RNA"/>
</dbReference>
<dbReference type="EMBL" id="AH012999">
    <property type="protein sequence ID" value="AAP82970.1"/>
    <property type="molecule type" value="Genomic_RNA"/>
</dbReference>
<dbReference type="PDB" id="1XAK">
    <property type="method" value="X-ray"/>
    <property type="resolution" value="1.80 A"/>
    <property type="chains" value="A=14-96"/>
</dbReference>
<dbReference type="PDB" id="1YO4">
    <property type="method" value="NMR"/>
    <property type="chains" value="A=16-99"/>
</dbReference>
<dbReference type="PDBsum" id="1XAK"/>
<dbReference type="PDBsum" id="1YO4"/>
<dbReference type="BMRB" id="P59635"/>
<dbReference type="SMR" id="P59635"/>
<dbReference type="BioGRID" id="4383920">
    <property type="interactions" value="54"/>
</dbReference>
<dbReference type="ELM" id="P59635"/>
<dbReference type="IntAct" id="P59635">
    <property type="interactions" value="46"/>
</dbReference>
<dbReference type="iPTMnet" id="P59635"/>
<dbReference type="OrthoDB" id="35129at10239"/>
<dbReference type="Reactome" id="R-HSA-9678110">
    <property type="pathway name" value="Attachment and Entry"/>
</dbReference>
<dbReference type="Reactome" id="R-HSA-9679509">
    <property type="pathway name" value="Virion Assembly and Release"/>
</dbReference>
<dbReference type="Reactome" id="R-HSA-9692913">
    <property type="pathway name" value="SARS-CoV-1-mediated effects on programmed cell death"/>
</dbReference>
<dbReference type="Reactome" id="R-HSA-9692916">
    <property type="pathway name" value="SARS-CoV-1 activates/modulates innate immune responses"/>
</dbReference>
<dbReference type="SIGNOR" id="P59635"/>
<dbReference type="EvolutionaryTrace" id="P59635"/>
<dbReference type="Proteomes" id="UP000000354">
    <property type="component" value="Segment"/>
</dbReference>
<dbReference type="Proteomes" id="UP000103670">
    <property type="component" value="Segment"/>
</dbReference>
<dbReference type="Proteomes" id="UP000109640">
    <property type="component" value="Segment"/>
</dbReference>
<dbReference type="Proteomes" id="UP000116947">
    <property type="component" value="Segment"/>
</dbReference>
<dbReference type="Proteomes" id="UP000121636">
    <property type="component" value="Segment"/>
</dbReference>
<dbReference type="Proteomes" id="UP000131569">
    <property type="component" value="Segment"/>
</dbReference>
<dbReference type="Proteomes" id="UP000131955">
    <property type="component" value="Segment"/>
</dbReference>
<dbReference type="Proteomes" id="UP000137377">
    <property type="component" value="Genome"/>
</dbReference>
<dbReference type="Proteomes" id="UP000138690">
    <property type="component" value="Segment"/>
</dbReference>
<dbReference type="Proteomes" id="UP000143093">
    <property type="component" value="Segment"/>
</dbReference>
<dbReference type="Proteomes" id="UP000145651">
    <property type="component" value="Segment"/>
</dbReference>
<dbReference type="Proteomes" id="UP000146108">
    <property type="component" value="Segment"/>
</dbReference>
<dbReference type="Proteomes" id="UP000146181">
    <property type="component" value="Segment"/>
</dbReference>
<dbReference type="Proteomes" id="UP000146296">
    <property type="component" value="Segment"/>
</dbReference>
<dbReference type="Proteomes" id="UP000148194">
    <property type="component" value="Segment"/>
</dbReference>
<dbReference type="Proteomes" id="UP000153467">
    <property type="component" value="Segment"/>
</dbReference>
<dbReference type="Proteomes" id="UP000160648">
    <property type="component" value="Segment"/>
</dbReference>
<dbReference type="Proteomes" id="UP000164441">
    <property type="component" value="Segment"/>
</dbReference>
<dbReference type="Proteomes" id="UP000172416">
    <property type="component" value="Segment"/>
</dbReference>
<dbReference type="Proteomes" id="UP000180358">
    <property type="component" value="Segment"/>
</dbReference>
<dbReference type="GO" id="GO:0044165">
    <property type="term" value="C:host cell endoplasmic reticulum"/>
    <property type="evidence" value="ECO:0000314"/>
    <property type="project" value="UniProtKB"/>
</dbReference>
<dbReference type="GO" id="GO:0044167">
    <property type="term" value="C:host cell endoplasmic reticulum membrane"/>
    <property type="evidence" value="ECO:0007669"/>
    <property type="project" value="UniProtKB-SubCell"/>
</dbReference>
<dbReference type="GO" id="GO:0044173">
    <property type="term" value="C:host cell endoplasmic reticulum-Golgi intermediate compartment membrane"/>
    <property type="evidence" value="ECO:0007669"/>
    <property type="project" value="UniProtKB-SubCell"/>
</dbReference>
<dbReference type="GO" id="GO:0044177">
    <property type="term" value="C:host cell Golgi apparatus"/>
    <property type="evidence" value="ECO:0000314"/>
    <property type="project" value="UniProtKB"/>
</dbReference>
<dbReference type="GO" id="GO:0044178">
    <property type="term" value="C:host cell Golgi membrane"/>
    <property type="evidence" value="ECO:0007669"/>
    <property type="project" value="UniProtKB-SubCell"/>
</dbReference>
<dbReference type="GO" id="GO:0005886">
    <property type="term" value="C:plasma membrane"/>
    <property type="evidence" value="ECO:0000304"/>
    <property type="project" value="Reactome"/>
</dbReference>
<dbReference type="GO" id="GO:0055036">
    <property type="term" value="C:virion membrane"/>
    <property type="evidence" value="ECO:0000304"/>
    <property type="project" value="Reactome"/>
</dbReference>
<dbReference type="GO" id="GO:0052151">
    <property type="term" value="P:symbiont-mediated activation of host apoptosis"/>
    <property type="evidence" value="ECO:0000314"/>
    <property type="project" value="DIBU"/>
</dbReference>
<dbReference type="GO" id="GO:0039646">
    <property type="term" value="P:symbiont-mediated perturbation of host cell cycle G0/G1 transition checkpoint"/>
    <property type="evidence" value="ECO:0007669"/>
    <property type="project" value="UniProtKB-KW"/>
</dbReference>
<dbReference type="GO" id="GO:0044071">
    <property type="term" value="P:symbiont-mediated perturbation of host cell cycle progression"/>
    <property type="evidence" value="ECO:0007669"/>
    <property type="project" value="UniProtKB-KW"/>
</dbReference>
<dbReference type="GO" id="GO:0052170">
    <property type="term" value="P:symbiont-mediated suppression of host innate immune response"/>
    <property type="evidence" value="ECO:0007669"/>
    <property type="project" value="UniProtKB-KW"/>
</dbReference>
<dbReference type="GO" id="GO:0039587">
    <property type="term" value="P:symbiont-mediated-mediated suppression of host tetherin activity"/>
    <property type="evidence" value="ECO:0000314"/>
    <property type="project" value="UniProtKB"/>
</dbReference>
<dbReference type="FunFam" id="2.60.40.1550:FF:000001">
    <property type="entry name" value="ORF8"/>
    <property type="match status" value="1"/>
</dbReference>
<dbReference type="Gene3D" id="2.60.40.1550">
    <property type="entry name" value="SARS coronavirus X4"/>
    <property type="match status" value="1"/>
</dbReference>
<dbReference type="InterPro" id="IPR014888">
    <property type="entry name" value="ORF7a_SARS-CoV-like"/>
</dbReference>
<dbReference type="InterPro" id="IPR044871">
    <property type="entry name" value="ORF7a_SARS-CoV-like_X4e"/>
</dbReference>
<dbReference type="InterPro" id="IPR036495">
    <property type="entry name" value="ORF7a_sf_CoV"/>
</dbReference>
<dbReference type="Pfam" id="PF08779">
    <property type="entry name" value="bCoV_NS7A"/>
    <property type="match status" value="1"/>
</dbReference>
<dbReference type="SUPFAM" id="SSF117066">
    <property type="entry name" value="Accessory protein X4 (ORF8, ORF7a)"/>
    <property type="match status" value="1"/>
</dbReference>
<dbReference type="PROSITE" id="PS51919">
    <property type="entry name" value="X4E"/>
    <property type="match status" value="1"/>
</dbReference>
<reference key="1">
    <citation type="journal article" date="2003" name="Science">
        <title>Characterization of a novel coronavirus associated with severe acute respiratory syndrome.</title>
        <authorList>
            <person name="Rota P.A."/>
            <person name="Oberste M.S."/>
            <person name="Monroe S.S."/>
            <person name="Nix W.A."/>
            <person name="Campagnoli R."/>
            <person name="Icenogle J.P."/>
            <person name="Penaranda S."/>
            <person name="Bankamp B."/>
            <person name="Maher K."/>
            <person name="Chen M.-H."/>
            <person name="Tong S."/>
            <person name="Tamin A."/>
            <person name="Lowe L."/>
            <person name="Frace M."/>
            <person name="DeRisi J.L."/>
            <person name="Chen Q."/>
            <person name="Wang D."/>
            <person name="Erdman D.D."/>
            <person name="Peret T.C.T."/>
            <person name="Burns C."/>
            <person name="Ksiazek T.G."/>
            <person name="Rollin P.E."/>
            <person name="Sanchez A."/>
            <person name="Liffick S."/>
            <person name="Holloway B."/>
            <person name="Limor J."/>
            <person name="McCaustland K."/>
            <person name="Olsen-Rasmussen M."/>
            <person name="Fouchier R."/>
            <person name="Guenther S."/>
            <person name="Osterhaus A.D.M.E."/>
            <person name="Drosten C."/>
            <person name="Pallansch M.A."/>
            <person name="Anderson L.J."/>
            <person name="Bellini W.J."/>
        </authorList>
    </citation>
    <scope>NUCLEOTIDE SEQUENCE [GENOMIC RNA]</scope>
    <source>
        <strain>Isolate Urbani</strain>
    </source>
</reference>
<reference key="2">
    <citation type="journal article" date="2003" name="Science">
        <title>The genome sequence of the SARS-associated coronavirus.</title>
        <authorList>
            <person name="Marra M.A."/>
            <person name="Jones S.J.M."/>
            <person name="Astell C.R."/>
            <person name="Holt R.A."/>
            <person name="Brooks-Wilson A."/>
            <person name="Butterfield Y.S.N."/>
            <person name="Khattra J."/>
            <person name="Asano J.K."/>
            <person name="Barber S.A."/>
            <person name="Chan S.Y."/>
            <person name="Cloutier A."/>
            <person name="Coughlin S.M."/>
            <person name="Freeman D."/>
            <person name="Girn N."/>
            <person name="Griffith O.L."/>
            <person name="Leach S.R."/>
            <person name="Mayo M."/>
            <person name="McDonald H."/>
            <person name="Montgomery S.B."/>
            <person name="Pandoh P.K."/>
            <person name="Petrescu A.S."/>
            <person name="Robertson A.G."/>
            <person name="Schein J.E."/>
            <person name="Siddiqui A."/>
            <person name="Smailus D.E."/>
            <person name="Stott J.M."/>
            <person name="Yang G.S."/>
            <person name="Plummer F."/>
            <person name="Andonov A."/>
            <person name="Artsob H."/>
            <person name="Bastien N."/>
            <person name="Bernard K."/>
            <person name="Booth T.F."/>
            <person name="Bowness D."/>
            <person name="Czub M."/>
            <person name="Drebot M."/>
            <person name="Fernando L."/>
            <person name="Flick R."/>
            <person name="Garbutt M."/>
            <person name="Gray M."/>
            <person name="Grolla A."/>
            <person name="Jones S."/>
            <person name="Feldmann H."/>
            <person name="Meyers A."/>
            <person name="Kabani A."/>
            <person name="Li Y."/>
            <person name="Normand S."/>
            <person name="Stroher U."/>
            <person name="Tipples G.A."/>
            <person name="Tyler S."/>
            <person name="Vogrig R."/>
            <person name="Ward D."/>
            <person name="Watson B."/>
            <person name="Brunham R.C."/>
            <person name="Krajden M."/>
            <person name="Petric M."/>
            <person name="Skowronski D.M."/>
            <person name="Upton C."/>
            <person name="Roper R.L."/>
        </authorList>
    </citation>
    <scope>NUCLEOTIDE SEQUENCE [GENOMIC RNA]</scope>
    <source>
        <strain>Isolate Tor2</strain>
    </source>
</reference>
<reference key="3">
    <citation type="journal article" date="2003" name="N. Engl. J. Med.">
        <title>Coronavirus genomic-sequence variations and the epidemiology of the severe acute respiratory syndrome.</title>
        <authorList>
            <person name="Tsui S.K.W."/>
            <person name="Chim S.S.C."/>
            <person name="Lo Y.M.D."/>
        </authorList>
    </citation>
    <scope>NUCLEOTIDE SEQUENCE [GENOMIC RNA]</scope>
    <source>
        <strain>Isolate CUHK-Su10</strain>
        <strain>Isolate CUHK-W1</strain>
    </source>
</reference>
<reference key="4">
    <citation type="journal article" date="2003" name="Exp. Biol. Med.">
        <title>The complete genome sequence of severe acute respiratory syndrome coronavirus strain HKU-39849 (HK-39).</title>
        <authorList>
            <person name="Zeng F.Y."/>
            <person name="Chan C.W."/>
            <person name="Chan M.N."/>
            <person name="Chen J.D."/>
            <person name="Chow K.Y.C."/>
            <person name="Hon C.C.C."/>
            <person name="Hui R.K.H."/>
            <person name="Li J."/>
            <person name="Li V.Y.Y."/>
            <person name="Wang C.Y."/>
            <person name="Wang P.Y."/>
            <person name="Guan Y."/>
            <person name="Zheng B."/>
            <person name="Poon L.L.M."/>
            <person name="Chan K.H."/>
            <person name="Yuen K.Y."/>
            <person name="Peiris J.S.M."/>
            <person name="Leung F.C."/>
        </authorList>
    </citation>
    <scope>NUCLEOTIDE SEQUENCE [GENOMIC RNA]</scope>
    <source>
        <strain>Isolate HKU-39849</strain>
    </source>
</reference>
<reference key="5">
    <citation type="submission" date="2003-04" db="EMBL/GenBank/DDBJ databases">
        <authorList>
            <person name="Qin E."/>
            <person name="Zhu Q."/>
            <person name="Yu M."/>
            <person name="Fan B."/>
            <person name="Chang G."/>
            <person name="Si B."/>
            <person name="Yang B."/>
            <person name="Peng W."/>
            <person name="Jiang T."/>
            <person name="Liu B."/>
            <person name="Deng Y."/>
            <person name="Liu H."/>
            <person name="Zhang Y."/>
            <person name="Wang C."/>
            <person name="Li Y."/>
            <person name="Gan Y."/>
            <person name="Li X."/>
            <person name="Lu F."/>
            <person name="Tan G."/>
            <person name="Yang R."/>
            <person name="Cao W.S."/>
            <person name="Wang J."/>
            <person name="Chen W."/>
            <person name="Cong L."/>
            <person name="Deng Y."/>
            <person name="Dong W."/>
            <person name="Han Y."/>
            <person name="Hu W."/>
            <person name="Lei M."/>
            <person name="Li C."/>
            <person name="Li G."/>
            <person name="Li G."/>
            <person name="Li H."/>
            <person name="Li S."/>
            <person name="Li S."/>
            <person name="Li W."/>
            <person name="Li W."/>
            <person name="Lin W."/>
            <person name="Liu J."/>
            <person name="Liu Z."/>
            <person name="Lu H."/>
            <person name="Ni P."/>
            <person name="Qi Q."/>
            <person name="Sun Y."/>
            <person name="Tang L."/>
            <person name="Tong Z."/>
            <person name="Wang J."/>
            <person name="Wang X."/>
            <person name="Wu Q."/>
            <person name="Xi Y."/>
            <person name="Xu Z."/>
            <person name="Yang L."/>
            <person name="Ye C."/>
            <person name="Ye J."/>
            <person name="Zhang B."/>
            <person name="Zhang F."/>
            <person name="Zhang J."/>
            <person name="Zhang X."/>
            <person name="Zhou J."/>
            <person name="Yang H."/>
        </authorList>
    </citation>
    <scope>NUCLEOTIDE SEQUENCE [GENOMIC RNA]</scope>
    <source>
        <strain>Isolate BJ01</strain>
        <strain>Isolate BJ02</strain>
        <strain>Isolate BJ03</strain>
        <strain>Isolate BJ04</strain>
        <strain>Isolate GD01</strain>
    </source>
</reference>
<reference key="6">
    <citation type="submission" date="2003-05" db="EMBL/GenBank/DDBJ databases">
        <title>The complete genome of SARS coronavirus clone TW1.</title>
        <authorList>
            <person name="Yeh S.-H."/>
            <person name="Kao C.-L."/>
            <person name="Tsai C.-Y."/>
            <person name="Liu C.-J."/>
            <person name="Chen D.-S."/>
            <person name="Chen P.-J."/>
        </authorList>
    </citation>
    <scope>NUCLEOTIDE SEQUENCE [GENOMIC RNA]</scope>
    <source>
        <strain>Isolate TW1</strain>
    </source>
</reference>
<reference key="7">
    <citation type="submission" date="2003-05" db="EMBL/GenBank/DDBJ databases">
        <title>SARS virus is a close relative of type II coronaviruses.</title>
        <authorList>
            <person name="Eickmann M."/>
            <person name="Becker S."/>
            <person name="Klenk H.-D."/>
            <person name="Doerr H.W."/>
            <person name="Stadler K."/>
            <person name="Censini S."/>
            <person name="Guidotti S."/>
            <person name="Masignani V."/>
            <person name="Scarselli M."/>
            <person name="Mora M."/>
            <person name="Donati C."/>
            <person name="Han J."/>
            <person name="Song H.C."/>
            <person name="Abrignani S."/>
            <person name="Covacci A."/>
            <person name="Rappuoli R."/>
        </authorList>
    </citation>
    <scope>NUCLEOTIDE SEQUENCE [GENOMIC RNA]</scope>
    <source>
        <strain>Isolate FRA</strain>
    </source>
</reference>
<reference key="8">
    <citation type="submission" date="2003-05" db="EMBL/GenBank/DDBJ databases">
        <authorList>
            <person name="Thiel V."/>
            <person name="Hertzig T."/>
            <person name="Putics A."/>
            <person name="Ivanov K.A."/>
            <person name="Schelle B."/>
            <person name="Bayer S."/>
            <person name="Scheiner B."/>
            <person name="Weinand H."/>
            <person name="Weissbrich B."/>
            <person name="Ziebuhr J."/>
        </authorList>
    </citation>
    <scope>NUCLEOTIDE SEQUENCE [GENOMIC RNA]</scope>
    <source>
        <strain>Isolate Frankfurt 1</strain>
    </source>
</reference>
<reference key="9">
    <citation type="submission" date="2003-07" db="EMBL/GenBank/DDBJ databases">
        <authorList>
            <person name="Chang J.-G.C."/>
            <person name="Lin T.-H."/>
            <person name="Chen C.-M."/>
            <person name="Lin C.-S."/>
            <person name="Chan W.-L."/>
            <person name="Shih M.-C."/>
        </authorList>
    </citation>
    <scope>NUCLEOTIDE SEQUENCE [GENOMIC RNA]</scope>
    <source>
        <strain>Isolate Taiwan TC1</strain>
        <strain>Isolate Taiwan TC2</strain>
        <strain>Isolate Taiwan TC3</strain>
    </source>
</reference>
<reference key="10">
    <citation type="submission" date="2003-07" db="EMBL/GenBank/DDBJ databases">
        <title>The complete genome of SARS coronavirus TWH.</title>
        <authorList>
            <person name="Shu H.Y."/>
            <person name="Wu K.M."/>
            <person name="Tsai S.F."/>
        </authorList>
    </citation>
    <scope>NUCLEOTIDE SEQUENCE [GENOMIC RNA]</scope>
    <source>
        <strain>Isolate TWH</strain>
        <strain>Isolate TWJ</strain>
        <strain>Isolate TWK</strain>
        <strain>Isolate TWS</strain>
        <strain>Isolate TWY</strain>
    </source>
</reference>
<reference key="11">
    <citation type="submission" date="2003-07" db="EMBL/GenBank/DDBJ databases">
        <authorList>
            <person name="Canducci F."/>
            <person name="Clementi M."/>
            <person name="Poli G."/>
            <person name="Vicenzi E."/>
        </authorList>
    </citation>
    <scope>NUCLEOTIDE SEQUENCE [GENOMIC RNA]</scope>
    <source>
        <strain>Isolate HSR 1</strain>
    </source>
</reference>
<reference key="12">
    <citation type="submission" date="2003-10" db="EMBL/GenBank/DDBJ databases">
        <authorList>
            <person name="Balotta C."/>
            <person name="Corvasce S."/>
            <person name="Violin M."/>
            <person name="Galli M."/>
            <person name="Moroni M."/>
            <person name="Vigevani G.M."/>
            <person name="Ruan Y.J."/>
            <person name="Salemi M."/>
        </authorList>
    </citation>
    <scope>NUCLEOTIDE SEQUENCE [GENOMIC RNA]</scope>
    <source>
        <strain>Isolate AS</strain>
    </source>
</reference>
<reference key="13">
    <citation type="submission" date="2004-01" db="EMBL/GenBank/DDBJ databases">
        <title>Analysis of SARS coronavirus genome in Shanghai isolates.</title>
        <authorList>
            <person name="Yuan Z."/>
            <person name="Zhang X."/>
            <person name="Hu Y."/>
            <person name="Lan S."/>
            <person name="Wang H."/>
            <person name="Zhou Z."/>
            <person name="Wen Y."/>
        </authorList>
    </citation>
    <scope>NUCLEOTIDE SEQUENCE [GENOMIC RNA]</scope>
    <source>
        <strain>Isolate Shanghai QXC1</strain>
    </source>
</reference>
<reference key="14">
    <citation type="submission" date="2003-06" db="EMBL/GenBank/DDBJ databases">
        <authorList>
            <person name="Yuan Z."/>
            <person name="Zhang X."/>
            <person name="Hu Y."/>
            <person name="Lan S."/>
            <person name="Wang H."/>
            <person name="Zhou Z."/>
            <person name="Wen Y."/>
        </authorList>
    </citation>
    <scope>NUCLEOTIDE SEQUENCE [GENOMIC RNA] OF 32-122</scope>
    <source>
        <strain>Isolate Shanghai LY</strain>
    </source>
</reference>
<reference key="15">
    <citation type="journal article" date="2005" name="Structure">
        <title>Structure and intracellular targeting of the SARS-coronavirus Orf7a accessory protein.</title>
        <authorList>
            <person name="Nelson C.A."/>
            <person name="Pekosz A."/>
            <person name="Lee C.A."/>
            <person name="Diamond M.S."/>
            <person name="Fremont D.H."/>
        </authorList>
    </citation>
    <scope>PEPTIDE SEQUENCE OF 16-29</scope>
    <scope>SUBCELLULAR LOCATION</scope>
    <scope>X-RAY CRYSTALLOGRAPHY (1.8 ANGSTROMS) OF 16-96</scope>
</reference>
<reference key="16">
    <citation type="journal article" date="2004" name="J. Virol.">
        <title>A novel severe acute respiratory syndrome coronavirus protein, U274, is transported to the cell surface and undergoes endocytosis.</title>
        <authorList>
            <person name="Tan Y.-J."/>
            <person name="Teng E."/>
            <person name="Shen S."/>
            <person name="Tan T.H.P."/>
            <person name="Goh P.-Y."/>
            <person name="Fielding B.C."/>
            <person name="Ooi E.-E."/>
            <person name="Tan H.-C."/>
            <person name="Lim S.G."/>
            <person name="Hong W."/>
        </authorList>
    </citation>
    <scope>INTERACTION WITH ACCESSORY PROTEIN 3A</scope>
</reference>
<reference key="17">
    <citation type="journal article" date="2004" name="J. Virol.">
        <title>Characterization of a unique group-specific protein (U122) of the severe acute respiratory syndrome coronavirus.</title>
        <authorList>
            <person name="Fielding B.C."/>
            <person name="Tan Y.-J."/>
            <person name="Shuo S."/>
            <person name="Tan T.H.P."/>
            <person name="Ooi E.-E."/>
            <person name="Lim S.G."/>
            <person name="Hong W."/>
            <person name="Goh P.-Y."/>
        </authorList>
    </citation>
    <scope>SUBCELLULAR LOCATION</scope>
    <scope>DI-LYSINE MOTIF</scope>
    <scope>MUTAGENESIS OF 14-SER--TYR-18 AND 118-LYS--LYS-120</scope>
</reference>
<reference key="18">
    <citation type="journal article" date="2004" name="J. Virol.">
        <title>Overexpression of 7a, a protein specifically encoded by the severe acute respiratory syndrome coronavirus, induces apoptosis via a caspase-dependent pathway.</title>
        <authorList>
            <person name="Tan Y.-J."/>
            <person name="Fielding B.C."/>
            <person name="Goh P.-Y."/>
            <person name="Shen S."/>
            <person name="Tan T.H.P."/>
            <person name="Lim S.G."/>
            <person name="Hong W."/>
        </authorList>
    </citation>
    <scope>FUNCTION</scope>
</reference>
<reference key="19">
    <citation type="journal article" date="2006" name="J. Virol.">
        <title>Severe acute respiratory syndrome coronavirus 7a accessory protein is a viral structural protein.</title>
        <authorList>
            <person name="Huang C."/>
            <person name="Ito N."/>
            <person name="Tseng C.-T.K."/>
            <person name="Makino S."/>
        </authorList>
    </citation>
    <scope>SUBCELLULAR LOCATION</scope>
    <scope>INTERACTION WITH SPIKE GLYCOPROTEIN</scope>
</reference>
<reference key="20">
    <citation type="journal article" date="2006" name="Adv. Exp. Med. Biol.">
        <title>Structure, expression, and intracellular localization of the SARS-CoV accessory proteins 7a and 7b.</title>
        <authorList>
            <person name="Pekosz A."/>
            <person name="Schaecher S.R."/>
            <person name="Diamond M.S."/>
            <person name="Fremont D.H."/>
            <person name="Sims A.C."/>
            <person name="Baric R.S."/>
        </authorList>
    </citation>
    <scope>SUBCELLULAR LOCATION</scope>
</reference>
<reference key="21">
    <citation type="journal article" date="2006" name="Biochem. Biophys. Res. Commun.">
        <title>Severe acute respiratory syndrome coronavirus protein 7a interacts with hSGT.</title>
        <authorList>
            <person name="Fielding B.C."/>
            <person name="Gunalan V."/>
            <person name="Tan T.H.P."/>
            <person name="Chou C.-F."/>
            <person name="Shen S."/>
            <person name="Khan S."/>
            <person name="Lim S.G."/>
            <person name="Hong W."/>
            <person name="Tan Y.-J."/>
        </authorList>
    </citation>
    <scope>INTERACTION WITH M PROTEIN; E PROTEIN AND HUMAN SGT</scope>
</reference>
<reference key="22">
    <citation type="journal article" date="2006" name="J. Biomed. Sci.">
        <title>Solution structure of the X4 protein coded by the SARS related coronavirus reveals an immunoglobulin like fold and suggests a binding activity to integrin I domains.</title>
        <authorList>
            <person name="Haenel K."/>
            <person name="Stangler T."/>
            <person name="Stoldt M."/>
            <person name="Willbold D."/>
        </authorList>
    </citation>
    <scope>STRUCTURE BY NMR OF 16-99</scope>
</reference>
<reference key="23">
    <citation type="journal article" date="2007" name="Biol. Chem.">
        <title>SARS-CoV accessory protein 7a directly interacts with human LFA-1.</title>
        <authorList>
            <person name="Haenel K."/>
            <person name="Willbold D."/>
        </authorList>
    </citation>
    <scope>FUNCTION</scope>
    <scope>INTERACTION WITH HOST ITGAL</scope>
</reference>
<reference key="24">
    <citation type="journal article" date="2010" name="J. Virol.">
        <title>The 7a accessory protein of severe acute respiratory syndrome coronavirus acts as an RNA silencing suppressor.</title>
        <authorList>
            <person name="Karjee S."/>
            <person name="Minhas A."/>
            <person name="Sood V."/>
            <person name="Ponia S.S."/>
            <person name="Banerjea A.C."/>
            <person name="Chow V.T."/>
            <person name="Mukherjee S.K."/>
            <person name="Lal S.K."/>
        </authorList>
    </citation>
    <scope>FUNCTION</scope>
</reference>
<reference key="25">
    <citation type="journal article" date="2015" name="J. Virol.">
        <title>Severe Acute Respiratory Syndrome Coronavirus ORF7a Inhibits Bone Marrow Stromal Antigen 2 Virion Tethering through a Novel Mechanism of Glycosylation Interference.</title>
        <authorList>
            <person name="Taylor J.K."/>
            <person name="Coleman C.M."/>
            <person name="Postel S."/>
            <person name="Sisk J.M."/>
            <person name="Bernbaum J.G."/>
            <person name="Venkataraman T."/>
            <person name="Sundberg E.J."/>
            <person name="Frieman M.B."/>
        </authorList>
    </citation>
    <scope>FUNCTION</scope>
    <scope>INTERACTION WITH HOST BST2</scope>
</reference>